<name>ATPG_ECOL6</name>
<keyword id="KW-0066">ATP synthesis</keyword>
<keyword id="KW-0997">Cell inner membrane</keyword>
<keyword id="KW-1003">Cell membrane</keyword>
<keyword id="KW-0139">CF(1)</keyword>
<keyword id="KW-0375">Hydrogen ion transport</keyword>
<keyword id="KW-0406">Ion transport</keyword>
<keyword id="KW-0472">Membrane</keyword>
<keyword id="KW-1185">Reference proteome</keyword>
<keyword id="KW-0813">Transport</keyword>
<sequence length="287" mass="31577">MAGAKEIRSKIASVQNTQKITKAMEMVAASKMRKSQDRMAASRPYAETMRKVIGHLAHGNLEYKHPYLEDRDVKRVGYLVVSTDRGLCGGLNINLFKKLLAEMKTWTDKGVQCDLAMIGSKGVSFFNSVGGNVVAQVTGMGDNPSLSELIGPVKVMLQAYDEGRLDKLYIVSNKFINTMSQVPTISQLLPLPASDDDDLKHKSWDYLYEPDPKALLDTLLRRYVESQVYQGVVENLASEQAARMVAMKAATDNGGSLIKELQLVYNKARQASITQELTEIVSGAAAV</sequence>
<protein>
    <recommendedName>
        <fullName>ATP synthase gamma chain</fullName>
    </recommendedName>
    <alternativeName>
        <fullName>ATP synthase F1 sector gamma subunit</fullName>
    </alternativeName>
    <alternativeName>
        <fullName>F-ATPase gamma subunit</fullName>
    </alternativeName>
</protein>
<accession>P0ABA7</accession>
<accession>P00837</accession>
<accession>P00838</accession>
<feature type="chain" id="PRO_0000073284" description="ATP synthase gamma chain">
    <location>
        <begin position="1"/>
        <end position="287"/>
    </location>
</feature>
<reference key="1">
    <citation type="journal article" date="2002" name="Proc. Natl. Acad. Sci. U.S.A.">
        <title>Extensive mosaic structure revealed by the complete genome sequence of uropathogenic Escherichia coli.</title>
        <authorList>
            <person name="Welch R.A."/>
            <person name="Burland V."/>
            <person name="Plunkett G. III"/>
            <person name="Redford P."/>
            <person name="Roesch P."/>
            <person name="Rasko D."/>
            <person name="Buckles E.L."/>
            <person name="Liou S.-R."/>
            <person name="Boutin A."/>
            <person name="Hackett J."/>
            <person name="Stroud D."/>
            <person name="Mayhew G.F."/>
            <person name="Rose D.J."/>
            <person name="Zhou S."/>
            <person name="Schwartz D.C."/>
            <person name="Perna N.T."/>
            <person name="Mobley H.L.T."/>
            <person name="Donnenberg M.S."/>
            <person name="Blattner F.R."/>
        </authorList>
    </citation>
    <scope>NUCLEOTIDE SEQUENCE [LARGE SCALE GENOMIC DNA]</scope>
    <source>
        <strain>CFT073 / ATCC 700928 / UPEC</strain>
    </source>
</reference>
<organism>
    <name type="scientific">Escherichia coli O6:H1 (strain CFT073 / ATCC 700928 / UPEC)</name>
    <dbReference type="NCBI Taxonomy" id="199310"/>
    <lineage>
        <taxon>Bacteria</taxon>
        <taxon>Pseudomonadati</taxon>
        <taxon>Pseudomonadota</taxon>
        <taxon>Gammaproteobacteria</taxon>
        <taxon>Enterobacterales</taxon>
        <taxon>Enterobacteriaceae</taxon>
        <taxon>Escherichia</taxon>
    </lineage>
</organism>
<dbReference type="EMBL" id="AE014075">
    <property type="protein sequence ID" value="AAN83091.1"/>
    <property type="molecule type" value="Genomic_DNA"/>
</dbReference>
<dbReference type="RefSeq" id="WP_000896498.1">
    <property type="nucleotide sequence ID" value="NZ_CP051263.1"/>
</dbReference>
<dbReference type="SMR" id="P0ABA7"/>
<dbReference type="STRING" id="199310.c4659"/>
<dbReference type="GeneID" id="93778234"/>
<dbReference type="KEGG" id="ecc:c4659"/>
<dbReference type="eggNOG" id="COG0224">
    <property type="taxonomic scope" value="Bacteria"/>
</dbReference>
<dbReference type="HOGENOM" id="CLU_050669_0_1_6"/>
<dbReference type="BioCyc" id="ECOL199310:C4659-MONOMER"/>
<dbReference type="Proteomes" id="UP000001410">
    <property type="component" value="Chromosome"/>
</dbReference>
<dbReference type="GO" id="GO:0005886">
    <property type="term" value="C:plasma membrane"/>
    <property type="evidence" value="ECO:0007669"/>
    <property type="project" value="UniProtKB-SubCell"/>
</dbReference>
<dbReference type="GO" id="GO:0045259">
    <property type="term" value="C:proton-transporting ATP synthase complex"/>
    <property type="evidence" value="ECO:0007669"/>
    <property type="project" value="UniProtKB-KW"/>
</dbReference>
<dbReference type="GO" id="GO:0005524">
    <property type="term" value="F:ATP binding"/>
    <property type="evidence" value="ECO:0007669"/>
    <property type="project" value="UniProtKB-UniRule"/>
</dbReference>
<dbReference type="GO" id="GO:0046933">
    <property type="term" value="F:proton-transporting ATP synthase activity, rotational mechanism"/>
    <property type="evidence" value="ECO:0007669"/>
    <property type="project" value="UniProtKB-UniRule"/>
</dbReference>
<dbReference type="GO" id="GO:0042777">
    <property type="term" value="P:proton motive force-driven plasma membrane ATP synthesis"/>
    <property type="evidence" value="ECO:0007669"/>
    <property type="project" value="UniProtKB-UniRule"/>
</dbReference>
<dbReference type="CDD" id="cd12151">
    <property type="entry name" value="F1-ATPase_gamma"/>
    <property type="match status" value="1"/>
</dbReference>
<dbReference type="FunFam" id="1.10.287.80:FF:000005">
    <property type="entry name" value="ATP synthase gamma chain"/>
    <property type="match status" value="2"/>
</dbReference>
<dbReference type="FunFam" id="3.40.1380.10:FF:000001">
    <property type="entry name" value="ATP synthase gamma chain"/>
    <property type="match status" value="1"/>
</dbReference>
<dbReference type="Gene3D" id="3.40.1380.10">
    <property type="match status" value="1"/>
</dbReference>
<dbReference type="Gene3D" id="1.10.287.80">
    <property type="entry name" value="ATP synthase, gamma subunit, helix hairpin domain"/>
    <property type="match status" value="1"/>
</dbReference>
<dbReference type="HAMAP" id="MF_00815">
    <property type="entry name" value="ATP_synth_gamma_bact"/>
    <property type="match status" value="1"/>
</dbReference>
<dbReference type="InterPro" id="IPR035968">
    <property type="entry name" value="ATP_synth_F1_ATPase_gsu"/>
</dbReference>
<dbReference type="InterPro" id="IPR000131">
    <property type="entry name" value="ATP_synth_F1_gsu"/>
</dbReference>
<dbReference type="InterPro" id="IPR023632">
    <property type="entry name" value="ATP_synth_F1_gsu_CS"/>
</dbReference>
<dbReference type="NCBIfam" id="TIGR01146">
    <property type="entry name" value="ATPsyn_F1gamma"/>
    <property type="match status" value="1"/>
</dbReference>
<dbReference type="NCBIfam" id="NF004144">
    <property type="entry name" value="PRK05621.1-1"/>
    <property type="match status" value="1"/>
</dbReference>
<dbReference type="PANTHER" id="PTHR11693">
    <property type="entry name" value="ATP SYNTHASE GAMMA CHAIN"/>
    <property type="match status" value="1"/>
</dbReference>
<dbReference type="PANTHER" id="PTHR11693:SF22">
    <property type="entry name" value="ATP SYNTHASE SUBUNIT GAMMA, MITOCHONDRIAL"/>
    <property type="match status" value="1"/>
</dbReference>
<dbReference type="Pfam" id="PF00231">
    <property type="entry name" value="ATP-synt"/>
    <property type="match status" value="1"/>
</dbReference>
<dbReference type="PRINTS" id="PR00126">
    <property type="entry name" value="ATPASEGAMMA"/>
</dbReference>
<dbReference type="SUPFAM" id="SSF52943">
    <property type="entry name" value="ATP synthase (F1-ATPase), gamma subunit"/>
    <property type="match status" value="1"/>
</dbReference>
<dbReference type="PROSITE" id="PS00153">
    <property type="entry name" value="ATPASE_GAMMA"/>
    <property type="match status" value="1"/>
</dbReference>
<gene>
    <name type="primary">atpG</name>
    <name type="ordered locus">c4659</name>
</gene>
<comment type="function">
    <text evidence="1">Produces ATP from ADP in the presence of a proton gradient across the membrane. The gamma chain is believed to be important in regulating ATPase activity and the flow of protons through the CF(0) complex (By similarity).</text>
</comment>
<comment type="subunit">
    <text evidence="1">F-type ATPases have 2 components, CF(1) - the catalytic core - and CF(0) - the membrane proton channel. CF(1) has five subunits: alpha(3), beta(3), gamma(1), delta(1), epsilon(1). CF(0) has three main subunits: a, b and c (By similarity).</text>
</comment>
<comment type="subcellular location">
    <subcellularLocation>
        <location evidence="1">Cell inner membrane</location>
        <topology evidence="1">Peripheral membrane protein</topology>
    </subcellularLocation>
</comment>
<comment type="similarity">
    <text evidence="2">Belongs to the ATPase gamma chain family.</text>
</comment>
<proteinExistence type="inferred from homology"/>
<evidence type="ECO:0000250" key="1"/>
<evidence type="ECO:0000305" key="2"/>